<sequence length="143" mass="15783">MSIIQEFKEFAIKGNMMDLAIGVIIGGAFGKIVDSLVKDIIMPLITVITGGGVDFSQKFIVLGANPNNLQSLDALQKAGINVLTYGNFLTILINFLILAWVVFLMVKLLNKLRRDKNEPEAPAATPEDIQLLREIRDELKKQA</sequence>
<accession>B7GWU1</accession>
<protein>
    <recommendedName>
        <fullName evidence="1">Large-conductance mechanosensitive channel</fullName>
    </recommendedName>
</protein>
<dbReference type="EMBL" id="CP001172">
    <property type="protein sequence ID" value="ACJ58696.1"/>
    <property type="molecule type" value="Genomic_DNA"/>
</dbReference>
<dbReference type="RefSeq" id="WP_000022555.1">
    <property type="nucleotide sequence ID" value="NZ_CP001172.1"/>
</dbReference>
<dbReference type="SMR" id="B7GWU1"/>
<dbReference type="GeneID" id="92895113"/>
<dbReference type="HOGENOM" id="CLU_095787_0_1_6"/>
<dbReference type="Proteomes" id="UP000006924">
    <property type="component" value="Chromosome"/>
</dbReference>
<dbReference type="GO" id="GO:0005886">
    <property type="term" value="C:plasma membrane"/>
    <property type="evidence" value="ECO:0007669"/>
    <property type="project" value="UniProtKB-SubCell"/>
</dbReference>
<dbReference type="GO" id="GO:0008381">
    <property type="term" value="F:mechanosensitive monoatomic ion channel activity"/>
    <property type="evidence" value="ECO:0007669"/>
    <property type="project" value="UniProtKB-UniRule"/>
</dbReference>
<dbReference type="Gene3D" id="1.10.1200.120">
    <property type="entry name" value="Large-conductance mechanosensitive channel, MscL, domain 1"/>
    <property type="match status" value="1"/>
</dbReference>
<dbReference type="HAMAP" id="MF_00115">
    <property type="entry name" value="MscL"/>
    <property type="match status" value="1"/>
</dbReference>
<dbReference type="InterPro" id="IPR019823">
    <property type="entry name" value="Mechanosensitive_channel_CS"/>
</dbReference>
<dbReference type="InterPro" id="IPR001185">
    <property type="entry name" value="MS_channel"/>
</dbReference>
<dbReference type="InterPro" id="IPR037673">
    <property type="entry name" value="MSC/AndL"/>
</dbReference>
<dbReference type="InterPro" id="IPR036019">
    <property type="entry name" value="MscL_channel"/>
</dbReference>
<dbReference type="NCBIfam" id="TIGR00220">
    <property type="entry name" value="mscL"/>
    <property type="match status" value="1"/>
</dbReference>
<dbReference type="NCBIfam" id="NF001843">
    <property type="entry name" value="PRK00567.1-4"/>
    <property type="match status" value="1"/>
</dbReference>
<dbReference type="NCBIfam" id="NF010557">
    <property type="entry name" value="PRK13952.1"/>
    <property type="match status" value="1"/>
</dbReference>
<dbReference type="PANTHER" id="PTHR30266:SF2">
    <property type="entry name" value="LARGE-CONDUCTANCE MECHANOSENSITIVE CHANNEL"/>
    <property type="match status" value="1"/>
</dbReference>
<dbReference type="PANTHER" id="PTHR30266">
    <property type="entry name" value="MECHANOSENSITIVE CHANNEL MSCL"/>
    <property type="match status" value="1"/>
</dbReference>
<dbReference type="Pfam" id="PF01741">
    <property type="entry name" value="MscL"/>
    <property type="match status" value="1"/>
</dbReference>
<dbReference type="PRINTS" id="PR01264">
    <property type="entry name" value="MECHCHANNEL"/>
</dbReference>
<dbReference type="SUPFAM" id="SSF81330">
    <property type="entry name" value="Gated mechanosensitive channel"/>
    <property type="match status" value="1"/>
</dbReference>
<dbReference type="PROSITE" id="PS01327">
    <property type="entry name" value="MSCL"/>
    <property type="match status" value="1"/>
</dbReference>
<proteinExistence type="inferred from homology"/>
<gene>
    <name evidence="1" type="primary">mscL</name>
    <name type="ordered locus">ABBFA_000628</name>
</gene>
<comment type="function">
    <text evidence="1">Channel that opens in response to stretch forces in the membrane lipid bilayer. May participate in the regulation of osmotic pressure changes within the cell.</text>
</comment>
<comment type="subunit">
    <text evidence="1">Homopentamer.</text>
</comment>
<comment type="subcellular location">
    <subcellularLocation>
        <location evidence="1">Cell inner membrane</location>
        <topology evidence="1">Multi-pass membrane protein</topology>
    </subcellularLocation>
</comment>
<comment type="similarity">
    <text evidence="1">Belongs to the MscL family.</text>
</comment>
<name>MSCL_ACIB3</name>
<reference key="1">
    <citation type="journal article" date="2008" name="J. Bacteriol.">
        <title>Comparative genome sequence analysis of multidrug-resistant Acinetobacter baumannii.</title>
        <authorList>
            <person name="Adams M.D."/>
            <person name="Goglin K."/>
            <person name="Molyneaux N."/>
            <person name="Hujer K.M."/>
            <person name="Lavender H."/>
            <person name="Jamison J.J."/>
            <person name="MacDonald I.J."/>
            <person name="Martin K.M."/>
            <person name="Russo T."/>
            <person name="Campagnari A.A."/>
            <person name="Hujer A.M."/>
            <person name="Bonomo R.A."/>
            <person name="Gill S.R."/>
        </authorList>
    </citation>
    <scope>NUCLEOTIDE SEQUENCE [LARGE SCALE GENOMIC DNA]</scope>
    <source>
        <strain>AB307-0294</strain>
    </source>
</reference>
<keyword id="KW-0997">Cell inner membrane</keyword>
<keyword id="KW-1003">Cell membrane</keyword>
<keyword id="KW-0407">Ion channel</keyword>
<keyword id="KW-0406">Ion transport</keyword>
<keyword id="KW-0472">Membrane</keyword>
<keyword id="KW-0812">Transmembrane</keyword>
<keyword id="KW-1133">Transmembrane helix</keyword>
<keyword id="KW-0813">Transport</keyword>
<feature type="chain" id="PRO_1000117546" description="Large-conductance mechanosensitive channel">
    <location>
        <begin position="1"/>
        <end position="143"/>
    </location>
</feature>
<feature type="transmembrane region" description="Helical" evidence="1">
    <location>
        <begin position="10"/>
        <end position="30"/>
    </location>
</feature>
<feature type="transmembrane region" description="Helical" evidence="1">
    <location>
        <begin position="40"/>
        <end position="60"/>
    </location>
</feature>
<feature type="transmembrane region" description="Helical" evidence="1">
    <location>
        <begin position="86"/>
        <end position="106"/>
    </location>
</feature>
<evidence type="ECO:0000255" key="1">
    <source>
        <dbReference type="HAMAP-Rule" id="MF_00115"/>
    </source>
</evidence>
<organism>
    <name type="scientific">Acinetobacter baumannii (strain AB307-0294)</name>
    <dbReference type="NCBI Taxonomy" id="557600"/>
    <lineage>
        <taxon>Bacteria</taxon>
        <taxon>Pseudomonadati</taxon>
        <taxon>Pseudomonadota</taxon>
        <taxon>Gammaproteobacteria</taxon>
        <taxon>Moraxellales</taxon>
        <taxon>Moraxellaceae</taxon>
        <taxon>Acinetobacter</taxon>
        <taxon>Acinetobacter calcoaceticus/baumannii complex</taxon>
    </lineage>
</organism>